<sequence length="220" mass="24714">MSSLSKEAELVHQALLARGLETPLRKPELDAETRKTRIQAHMTEVMHLLNLDLTDDSLADTPRRIAKMYVDEIFSGLDYENFPKITLIQNKMKVDEMVTVRDITLTSTCEHHFVTIDGKATVAYIPKDSVIGLSKINRIVQFFAQRPQVQERLTQQILLALQTLLGTNNVAVSIDAVHYCVKARGIRDATSATTTTSLGGLFKSSQNTRQEFLRAVRHHG</sequence>
<reference key="1">
    <citation type="submission" date="2008-04" db="EMBL/GenBank/DDBJ databases">
        <title>Complete sequence of Yersinia pseudotuberculosis PB1/+.</title>
        <authorList>
            <person name="Copeland A."/>
            <person name="Lucas S."/>
            <person name="Lapidus A."/>
            <person name="Glavina del Rio T."/>
            <person name="Dalin E."/>
            <person name="Tice H."/>
            <person name="Bruce D."/>
            <person name="Goodwin L."/>
            <person name="Pitluck S."/>
            <person name="Munk A.C."/>
            <person name="Brettin T."/>
            <person name="Detter J.C."/>
            <person name="Han C."/>
            <person name="Tapia R."/>
            <person name="Schmutz J."/>
            <person name="Larimer F."/>
            <person name="Land M."/>
            <person name="Hauser L."/>
            <person name="Challacombe J.F."/>
            <person name="Green L."/>
            <person name="Lindler L.E."/>
            <person name="Nikolich M.P."/>
            <person name="Richardson P."/>
        </authorList>
    </citation>
    <scope>NUCLEOTIDE SEQUENCE [LARGE SCALE GENOMIC DNA]</scope>
    <source>
        <strain>PB1/+</strain>
    </source>
</reference>
<evidence type="ECO:0000255" key="1">
    <source>
        <dbReference type="HAMAP-Rule" id="MF_00223"/>
    </source>
</evidence>
<gene>
    <name evidence="1" type="primary">folE</name>
    <name type="ordered locus">YPTS_1630</name>
</gene>
<comment type="catalytic activity">
    <reaction evidence="1">
        <text>GTP + H2O = 7,8-dihydroneopterin 3'-triphosphate + formate + H(+)</text>
        <dbReference type="Rhea" id="RHEA:17473"/>
        <dbReference type="ChEBI" id="CHEBI:15377"/>
        <dbReference type="ChEBI" id="CHEBI:15378"/>
        <dbReference type="ChEBI" id="CHEBI:15740"/>
        <dbReference type="ChEBI" id="CHEBI:37565"/>
        <dbReference type="ChEBI" id="CHEBI:58462"/>
        <dbReference type="EC" id="3.5.4.16"/>
    </reaction>
</comment>
<comment type="pathway">
    <text evidence="1">Cofactor biosynthesis; 7,8-dihydroneopterin triphosphate biosynthesis; 7,8-dihydroneopterin triphosphate from GTP: step 1/1.</text>
</comment>
<comment type="subunit">
    <text evidence="1">Homomer.</text>
</comment>
<comment type="similarity">
    <text evidence="1">Belongs to the GTP cyclohydrolase I family.</text>
</comment>
<keyword id="KW-0342">GTP-binding</keyword>
<keyword id="KW-0378">Hydrolase</keyword>
<keyword id="KW-0479">Metal-binding</keyword>
<keyword id="KW-0547">Nucleotide-binding</keyword>
<keyword id="KW-0554">One-carbon metabolism</keyword>
<keyword id="KW-0862">Zinc</keyword>
<name>GCH1_YERPB</name>
<proteinExistence type="inferred from homology"/>
<feature type="chain" id="PRO_1000100212" description="GTP cyclohydrolase 1">
    <location>
        <begin position="1"/>
        <end position="220"/>
    </location>
</feature>
<feature type="binding site" evidence="1">
    <location>
        <position position="109"/>
    </location>
    <ligand>
        <name>Zn(2+)</name>
        <dbReference type="ChEBI" id="CHEBI:29105"/>
    </ligand>
</feature>
<feature type="binding site" evidence="1">
    <location>
        <position position="112"/>
    </location>
    <ligand>
        <name>Zn(2+)</name>
        <dbReference type="ChEBI" id="CHEBI:29105"/>
    </ligand>
</feature>
<feature type="binding site" evidence="1">
    <location>
        <position position="180"/>
    </location>
    <ligand>
        <name>Zn(2+)</name>
        <dbReference type="ChEBI" id="CHEBI:29105"/>
    </ligand>
</feature>
<accession>B2JZ02</accession>
<organism>
    <name type="scientific">Yersinia pseudotuberculosis serotype IB (strain PB1/+)</name>
    <dbReference type="NCBI Taxonomy" id="502801"/>
    <lineage>
        <taxon>Bacteria</taxon>
        <taxon>Pseudomonadati</taxon>
        <taxon>Pseudomonadota</taxon>
        <taxon>Gammaproteobacteria</taxon>
        <taxon>Enterobacterales</taxon>
        <taxon>Yersiniaceae</taxon>
        <taxon>Yersinia</taxon>
    </lineage>
</organism>
<protein>
    <recommendedName>
        <fullName evidence="1">GTP cyclohydrolase 1</fullName>
        <ecNumber evidence="1">3.5.4.16</ecNumber>
    </recommendedName>
    <alternativeName>
        <fullName evidence="1">GTP cyclohydrolase I</fullName>
        <shortName evidence="1">GTP-CH-I</shortName>
    </alternativeName>
</protein>
<dbReference type="EC" id="3.5.4.16" evidence="1"/>
<dbReference type="EMBL" id="CP001048">
    <property type="protein sequence ID" value="ACC88599.1"/>
    <property type="molecule type" value="Genomic_DNA"/>
</dbReference>
<dbReference type="RefSeq" id="WP_002211960.1">
    <property type="nucleotide sequence ID" value="NZ_CP009780.1"/>
</dbReference>
<dbReference type="SMR" id="B2JZ02"/>
<dbReference type="GeneID" id="57977063"/>
<dbReference type="KEGG" id="ypb:YPTS_1630"/>
<dbReference type="PATRIC" id="fig|502801.10.peg.998"/>
<dbReference type="UniPathway" id="UPA00848">
    <property type="reaction ID" value="UER00151"/>
</dbReference>
<dbReference type="GO" id="GO:0005737">
    <property type="term" value="C:cytoplasm"/>
    <property type="evidence" value="ECO:0007669"/>
    <property type="project" value="TreeGrafter"/>
</dbReference>
<dbReference type="GO" id="GO:0005525">
    <property type="term" value="F:GTP binding"/>
    <property type="evidence" value="ECO:0007669"/>
    <property type="project" value="UniProtKB-KW"/>
</dbReference>
<dbReference type="GO" id="GO:0003934">
    <property type="term" value="F:GTP cyclohydrolase I activity"/>
    <property type="evidence" value="ECO:0007669"/>
    <property type="project" value="UniProtKB-UniRule"/>
</dbReference>
<dbReference type="GO" id="GO:0008270">
    <property type="term" value="F:zinc ion binding"/>
    <property type="evidence" value="ECO:0007669"/>
    <property type="project" value="UniProtKB-UniRule"/>
</dbReference>
<dbReference type="GO" id="GO:0006730">
    <property type="term" value="P:one-carbon metabolic process"/>
    <property type="evidence" value="ECO:0007669"/>
    <property type="project" value="UniProtKB-UniRule"/>
</dbReference>
<dbReference type="GO" id="GO:0006729">
    <property type="term" value="P:tetrahydrobiopterin biosynthetic process"/>
    <property type="evidence" value="ECO:0007669"/>
    <property type="project" value="TreeGrafter"/>
</dbReference>
<dbReference type="GO" id="GO:0046654">
    <property type="term" value="P:tetrahydrofolate biosynthetic process"/>
    <property type="evidence" value="ECO:0007669"/>
    <property type="project" value="UniProtKB-UniRule"/>
</dbReference>
<dbReference type="FunFam" id="1.10.286.10:FF:000002">
    <property type="entry name" value="GTP cyclohydrolase 1"/>
    <property type="match status" value="1"/>
</dbReference>
<dbReference type="FunFam" id="3.30.1130.10:FF:000001">
    <property type="entry name" value="GTP cyclohydrolase 1"/>
    <property type="match status" value="1"/>
</dbReference>
<dbReference type="Gene3D" id="1.10.286.10">
    <property type="match status" value="1"/>
</dbReference>
<dbReference type="Gene3D" id="3.30.1130.10">
    <property type="match status" value="1"/>
</dbReference>
<dbReference type="HAMAP" id="MF_00223">
    <property type="entry name" value="FolE"/>
    <property type="match status" value="1"/>
</dbReference>
<dbReference type="InterPro" id="IPR043133">
    <property type="entry name" value="GTP-CH-I_C/QueF"/>
</dbReference>
<dbReference type="InterPro" id="IPR043134">
    <property type="entry name" value="GTP-CH-I_N"/>
</dbReference>
<dbReference type="InterPro" id="IPR001474">
    <property type="entry name" value="GTP_CycHdrlase_I"/>
</dbReference>
<dbReference type="InterPro" id="IPR018234">
    <property type="entry name" value="GTP_CycHdrlase_I_CS"/>
</dbReference>
<dbReference type="InterPro" id="IPR020602">
    <property type="entry name" value="GTP_CycHdrlase_I_dom"/>
</dbReference>
<dbReference type="NCBIfam" id="TIGR00063">
    <property type="entry name" value="folE"/>
    <property type="match status" value="1"/>
</dbReference>
<dbReference type="NCBIfam" id="NF006824">
    <property type="entry name" value="PRK09347.1-1"/>
    <property type="match status" value="1"/>
</dbReference>
<dbReference type="NCBIfam" id="NF006825">
    <property type="entry name" value="PRK09347.1-2"/>
    <property type="match status" value="1"/>
</dbReference>
<dbReference type="NCBIfam" id="NF006826">
    <property type="entry name" value="PRK09347.1-3"/>
    <property type="match status" value="1"/>
</dbReference>
<dbReference type="PANTHER" id="PTHR11109:SF7">
    <property type="entry name" value="GTP CYCLOHYDROLASE 1"/>
    <property type="match status" value="1"/>
</dbReference>
<dbReference type="PANTHER" id="PTHR11109">
    <property type="entry name" value="GTP CYCLOHYDROLASE I"/>
    <property type="match status" value="1"/>
</dbReference>
<dbReference type="Pfam" id="PF01227">
    <property type="entry name" value="GTP_cyclohydroI"/>
    <property type="match status" value="1"/>
</dbReference>
<dbReference type="SUPFAM" id="SSF55620">
    <property type="entry name" value="Tetrahydrobiopterin biosynthesis enzymes-like"/>
    <property type="match status" value="1"/>
</dbReference>
<dbReference type="PROSITE" id="PS00859">
    <property type="entry name" value="GTP_CYCLOHYDROL_1_1"/>
    <property type="match status" value="1"/>
</dbReference>
<dbReference type="PROSITE" id="PS00860">
    <property type="entry name" value="GTP_CYCLOHYDROL_1_2"/>
    <property type="match status" value="1"/>
</dbReference>